<proteinExistence type="inferred from homology"/>
<reference key="1">
    <citation type="submission" date="2005-10" db="EMBL/GenBank/DDBJ databases">
        <title>The NIAID influenza genome sequencing project.</title>
        <authorList>
            <person name="Ghedin E."/>
            <person name="Spiro D."/>
            <person name="Miller N."/>
            <person name="Zaborsky J."/>
            <person name="Feldblyum T."/>
            <person name="Subbu V."/>
            <person name="Shumway M."/>
            <person name="Sparenborg J."/>
            <person name="Groveman L."/>
            <person name="Halpin R."/>
            <person name="Sitz J."/>
            <person name="Koo H."/>
            <person name="Salzberg S.L."/>
            <person name="Webster R.G."/>
            <person name="Hoffmann E."/>
            <person name="Krauss S."/>
            <person name="Naeve C."/>
            <person name="Bao Y."/>
            <person name="Bolotov P."/>
            <person name="Dernovoy D."/>
            <person name="Kiryutin B."/>
            <person name="Lipman D.J."/>
            <person name="Tatusova T."/>
        </authorList>
    </citation>
    <scope>NUCLEOTIDE SEQUENCE [GENOMIC RNA]</scope>
</reference>
<keyword id="KW-0025">Alternative splicing</keyword>
<keyword id="KW-1048">Host nucleus</keyword>
<keyword id="KW-0472">Membrane</keyword>
<keyword id="KW-0694">RNA-binding</keyword>
<keyword id="KW-0468">Viral matrix protein</keyword>
<keyword id="KW-0946">Virion</keyword>
<name>M1_I83A8</name>
<evidence type="ECO:0000255" key="1">
    <source>
        <dbReference type="HAMAP-Rule" id="MF_04068"/>
    </source>
</evidence>
<organismHost>
    <name type="scientific">Aves</name>
    <dbReference type="NCBI Taxonomy" id="8782"/>
</organismHost>
<organismHost>
    <name type="scientific">Cetacea</name>
    <name type="common">whales</name>
    <dbReference type="NCBI Taxonomy" id="9721"/>
</organismHost>
<organismHost>
    <name type="scientific">Homo sapiens</name>
    <name type="common">Human</name>
    <dbReference type="NCBI Taxonomy" id="9606"/>
</organismHost>
<organismHost>
    <name type="scientific">Phocidae</name>
    <name type="common">true seals</name>
    <dbReference type="NCBI Taxonomy" id="9709"/>
</organismHost>
<organismHost>
    <name type="scientific">Sus scrofa</name>
    <name type="common">Pig</name>
    <dbReference type="NCBI Taxonomy" id="9823"/>
</organismHost>
<comment type="function">
    <text evidence="1">Plays critical roles in virus replication, from virus entry and uncoating to assembly and budding of the virus particle. M1 binding to ribonucleocapsids (RNPs) in nucleus seems to inhibit viral transcription. Interaction of viral NEP with M1-RNP is thought to promote nuclear export of the complex, which is targeted to the virion assembly site at the apical plasma membrane in polarized epithelial cells. Interactions with NA and HA may bring M1, a non-raft-associated protein, into lipid rafts. Forms a continuous shell on the inner side of the lipid bilayer in virion, where it binds the RNP. During virus entry into cell, the M2 ion channel acidifies the internal virion core, inducing M1 dissociation from the RNP. M1-free RNPs are transported to the nucleus, where viral transcription and replication can take place.</text>
</comment>
<comment type="function">
    <text evidence="1">Determines the virion's shape: spherical or filamentous. Clinical isolates of influenza are characterized by the presence of significant proportion of filamentous virions, whereas after multiple passage on eggs or cell culture, virions have only spherical morphology. Filamentous virions are thought to be important to infect neighboring cells, and spherical virions more suited to spread through aerosol between hosts organisms.</text>
</comment>
<comment type="subunit">
    <text evidence="1">Homodimer and homomultimer. Interacts with NEP. Binds ribonucleocapsid by both interacting with genomic RNA and NP protein. May interact with HA and NA. Cannot bind NP without genomic RNA.</text>
</comment>
<comment type="subcellular location">
    <subcellularLocation>
        <location evidence="1">Virion membrane</location>
        <topology evidence="1">Peripheral membrane protein</topology>
        <orientation evidence="1">Cytoplasmic side</orientation>
    </subcellularLocation>
    <subcellularLocation>
        <location evidence="1">Host nucleus</location>
    </subcellularLocation>
</comment>
<comment type="alternative products">
    <event type="alternative splicing"/>
    <isoform>
        <id>Q38SQ6-1</id>
        <name>M1</name>
        <sequence type="displayed"/>
    </isoform>
    <isoform>
        <id>Q38SQ7-1</id>
        <name>M2</name>
        <sequence type="external"/>
    </isoform>
    <text>Only the first 9 residues are shared by the 2 isoforms.</text>
</comment>
<comment type="miscellaneous">
    <text evidence="1">Most abundant protein in virion. When expressed alone can form virus-like particles in transfected cells.</text>
</comment>
<comment type="similarity">
    <text evidence="1">Belongs to the influenza viruses Matrix protein M1 family.</text>
</comment>
<feature type="chain" id="PRO_0000326322" description="Matrix protein 1">
    <location>
        <begin position="1"/>
        <end position="252"/>
    </location>
</feature>
<feature type="region of interest" description="Membrane-binding" evidence="1">
    <location>
        <begin position="1"/>
        <end position="164"/>
    </location>
</feature>
<feature type="region of interest" description="RNP-binding" evidence="1">
    <location>
        <begin position="165"/>
        <end position="252"/>
    </location>
</feature>
<feature type="short sequence motif" description="Nuclear localization signal" evidence="1">
    <location>
        <begin position="101"/>
        <end position="105"/>
    </location>
</feature>
<dbReference type="EMBL" id="CY003737">
    <property type="protein sequence ID" value="ABB04940.1"/>
    <property type="molecule type" value="Genomic_RNA"/>
</dbReference>
<dbReference type="SMR" id="Q38SQ6"/>
<dbReference type="Proteomes" id="UP000167548">
    <property type="component" value="Genome"/>
</dbReference>
<dbReference type="GO" id="GO:0042025">
    <property type="term" value="C:host cell nucleus"/>
    <property type="evidence" value="ECO:0007669"/>
    <property type="project" value="UniProtKB-SubCell"/>
</dbReference>
<dbReference type="GO" id="GO:0016020">
    <property type="term" value="C:membrane"/>
    <property type="evidence" value="ECO:0007669"/>
    <property type="project" value="UniProtKB-KW"/>
</dbReference>
<dbReference type="GO" id="GO:0055036">
    <property type="term" value="C:virion membrane"/>
    <property type="evidence" value="ECO:0007669"/>
    <property type="project" value="UniProtKB-SubCell"/>
</dbReference>
<dbReference type="GO" id="GO:0003723">
    <property type="term" value="F:RNA binding"/>
    <property type="evidence" value="ECO:0007669"/>
    <property type="project" value="UniProtKB-UniRule"/>
</dbReference>
<dbReference type="GO" id="GO:0039660">
    <property type="term" value="F:structural constituent of virion"/>
    <property type="evidence" value="ECO:0007669"/>
    <property type="project" value="UniProtKB-UniRule"/>
</dbReference>
<dbReference type="GO" id="GO:0046761">
    <property type="term" value="P:viral budding from plasma membrane"/>
    <property type="evidence" value="ECO:0007669"/>
    <property type="project" value="UniProtKB-UniRule"/>
</dbReference>
<dbReference type="FunFam" id="1.10.10.180:FF:000001">
    <property type="entry name" value="Matrix protein 1"/>
    <property type="match status" value="1"/>
</dbReference>
<dbReference type="FunFam" id="1.20.91.10:FF:000001">
    <property type="entry name" value="Matrix protein 1"/>
    <property type="match status" value="1"/>
</dbReference>
<dbReference type="Gene3D" id="1.10.10.180">
    <property type="match status" value="1"/>
</dbReference>
<dbReference type="Gene3D" id="1.20.91.10">
    <property type="match status" value="1"/>
</dbReference>
<dbReference type="HAMAP" id="MF_04068">
    <property type="entry name" value="INFV_M1"/>
    <property type="match status" value="1"/>
</dbReference>
<dbReference type="InterPro" id="IPR036039">
    <property type="entry name" value="Flu_matrix_M1"/>
</dbReference>
<dbReference type="InterPro" id="IPR013188">
    <property type="entry name" value="Flu_matrix_M1_C"/>
</dbReference>
<dbReference type="InterPro" id="IPR001561">
    <property type="entry name" value="Flu_matrix_M1_N"/>
</dbReference>
<dbReference type="InterPro" id="IPR015423">
    <property type="entry name" value="Flu_matrix_M1_N_sub1"/>
</dbReference>
<dbReference type="InterPro" id="IPR015799">
    <property type="entry name" value="Flu_matrix_M1_N_sub2"/>
</dbReference>
<dbReference type="InterPro" id="IPR037533">
    <property type="entry name" value="INFV_M1"/>
</dbReference>
<dbReference type="Pfam" id="PF00598">
    <property type="entry name" value="Flu_M1"/>
    <property type="match status" value="1"/>
</dbReference>
<dbReference type="Pfam" id="PF08289">
    <property type="entry name" value="Flu_M1_C"/>
    <property type="match status" value="1"/>
</dbReference>
<dbReference type="SMART" id="SM00759">
    <property type="entry name" value="Flu_M1_C"/>
    <property type="match status" value="1"/>
</dbReference>
<dbReference type="SUPFAM" id="SSF48145">
    <property type="entry name" value="Influenza virus matrix protein M1"/>
    <property type="match status" value="1"/>
</dbReference>
<sequence length="252" mass="27848">MSLLTEVETYVLSIVPSGPLKAEIAQRLEDVFAGKNTDLEALMEWLKTRPILSPLTKGILGFVFTLTVPSERGLQRRRFVQNALNGNGDPNNMDRAVKLYRKLKREITFHGAKEIALSYSAGALASCMGLIYNRMGAVTTEVAFGLVCATCEQIADSQHRSHRQMVATTNPLIRHENRMVLASTTAKAMEQMAGSSEQAAEAMEIASQARQMVQAMRAIGTHPSSSAGLKDDLLENLQTYQKRMGVQMQRFK</sequence>
<organism>
    <name type="scientific">Influenza A virus (strain A/Hong Kong/5/1983 H3N2)</name>
    <dbReference type="NCBI Taxonomy" id="387159"/>
    <lineage>
        <taxon>Viruses</taxon>
        <taxon>Riboviria</taxon>
        <taxon>Orthornavirae</taxon>
        <taxon>Negarnaviricota</taxon>
        <taxon>Polyploviricotina</taxon>
        <taxon>Insthoviricetes</taxon>
        <taxon>Articulavirales</taxon>
        <taxon>Orthomyxoviridae</taxon>
        <taxon>Alphainfluenzavirus</taxon>
        <taxon>Alphainfluenzavirus influenzae</taxon>
        <taxon>Influenza A virus</taxon>
    </lineage>
</organism>
<gene>
    <name evidence="1" type="primary">M</name>
</gene>
<protein>
    <recommendedName>
        <fullName evidence="1">Matrix protein 1</fullName>
        <shortName evidence="1">M1</shortName>
    </recommendedName>
</protein>
<accession>Q38SQ6</accession>